<evidence type="ECO:0000255" key="1">
    <source>
        <dbReference type="HAMAP-Rule" id="MF_01454"/>
    </source>
</evidence>
<evidence type="ECO:0000255" key="2">
    <source>
        <dbReference type="PROSITE-ProRule" id="PRU01231"/>
    </source>
</evidence>
<organism>
    <name type="scientific">Rickettsia akari (strain Hartford)</name>
    <dbReference type="NCBI Taxonomy" id="293614"/>
    <lineage>
        <taxon>Bacteria</taxon>
        <taxon>Pseudomonadati</taxon>
        <taxon>Pseudomonadota</taxon>
        <taxon>Alphaproteobacteria</taxon>
        <taxon>Rickettsiales</taxon>
        <taxon>Rickettsiaceae</taxon>
        <taxon>Rickettsieae</taxon>
        <taxon>Rickettsia</taxon>
        <taxon>spotted fever group</taxon>
    </lineage>
</organism>
<protein>
    <recommendedName>
        <fullName evidence="1">GTPase Obg</fullName>
        <ecNumber evidence="1">3.6.5.-</ecNumber>
    </recommendedName>
    <alternativeName>
        <fullName evidence="1">GTP-binding protein Obg</fullName>
    </alternativeName>
</protein>
<name>OBG_RICAH</name>
<sequence>MNFIDEVKIYIKGGNGGNGCVSFHREKFIDRGGPDGGDGGRGGSVIFRSNHHLNTLVNYRYKQHFTAENGENGKGSNRSGKSGKSLVLDVPIGTQIFSEDGNILLHDFTEDDQSFEIIKGGSGGLGNSHFKTSVNQAPRKRTEGEIAEEMWIHLSLKLLSDVGLVGLPNAGKSTFLSVVTAAKPKIADYPFTTLVPHLGVVYVDDEEFVIADIPGLIEGAHQGHGLGDKFLKHIERCNVLIHLIDGSSNDVVVDYNTVRLELGSYSDHLEHKIEIICLNKCDVLTDEEIQEKINKLQQATNKEVFSISTYTNLGVNKIVKLALKIIKNQE</sequence>
<gene>
    <name evidence="1" type="primary">obg</name>
    <name type="ordered locus">A1C_06535</name>
</gene>
<proteinExistence type="inferred from homology"/>
<dbReference type="EC" id="3.6.5.-" evidence="1"/>
<dbReference type="EMBL" id="CP000847">
    <property type="protein sequence ID" value="ABV75530.1"/>
    <property type="molecule type" value="Genomic_DNA"/>
</dbReference>
<dbReference type="RefSeq" id="WP_012150159.1">
    <property type="nucleotide sequence ID" value="NC_009881.1"/>
</dbReference>
<dbReference type="SMR" id="A8GQ55"/>
<dbReference type="STRING" id="293614.A1C_06535"/>
<dbReference type="KEGG" id="rak:A1C_06535"/>
<dbReference type="eggNOG" id="COG0536">
    <property type="taxonomic scope" value="Bacteria"/>
</dbReference>
<dbReference type="HOGENOM" id="CLU_011747_2_3_5"/>
<dbReference type="Proteomes" id="UP000006830">
    <property type="component" value="Chromosome"/>
</dbReference>
<dbReference type="GO" id="GO:0005737">
    <property type="term" value="C:cytoplasm"/>
    <property type="evidence" value="ECO:0007669"/>
    <property type="project" value="UniProtKB-SubCell"/>
</dbReference>
<dbReference type="GO" id="GO:0005525">
    <property type="term" value="F:GTP binding"/>
    <property type="evidence" value="ECO:0007669"/>
    <property type="project" value="UniProtKB-UniRule"/>
</dbReference>
<dbReference type="GO" id="GO:0003924">
    <property type="term" value="F:GTPase activity"/>
    <property type="evidence" value="ECO:0007669"/>
    <property type="project" value="UniProtKB-UniRule"/>
</dbReference>
<dbReference type="GO" id="GO:0000287">
    <property type="term" value="F:magnesium ion binding"/>
    <property type="evidence" value="ECO:0007669"/>
    <property type="project" value="InterPro"/>
</dbReference>
<dbReference type="GO" id="GO:0042254">
    <property type="term" value="P:ribosome biogenesis"/>
    <property type="evidence" value="ECO:0007669"/>
    <property type="project" value="UniProtKB-UniRule"/>
</dbReference>
<dbReference type="CDD" id="cd01898">
    <property type="entry name" value="Obg"/>
    <property type="match status" value="1"/>
</dbReference>
<dbReference type="FunFam" id="2.70.210.12:FF:000001">
    <property type="entry name" value="GTPase Obg"/>
    <property type="match status" value="1"/>
</dbReference>
<dbReference type="Gene3D" id="2.70.210.12">
    <property type="entry name" value="GTP1/OBG domain"/>
    <property type="match status" value="1"/>
</dbReference>
<dbReference type="Gene3D" id="3.40.50.300">
    <property type="entry name" value="P-loop containing nucleotide triphosphate hydrolases"/>
    <property type="match status" value="1"/>
</dbReference>
<dbReference type="HAMAP" id="MF_01454">
    <property type="entry name" value="GTPase_Obg"/>
    <property type="match status" value="1"/>
</dbReference>
<dbReference type="InterPro" id="IPR031167">
    <property type="entry name" value="G_OBG"/>
</dbReference>
<dbReference type="InterPro" id="IPR006073">
    <property type="entry name" value="GTP-bd"/>
</dbReference>
<dbReference type="InterPro" id="IPR014100">
    <property type="entry name" value="GTP-bd_Obg/CgtA"/>
</dbReference>
<dbReference type="InterPro" id="IPR006074">
    <property type="entry name" value="GTP1-OBG_CS"/>
</dbReference>
<dbReference type="InterPro" id="IPR006169">
    <property type="entry name" value="GTP1_OBG_dom"/>
</dbReference>
<dbReference type="InterPro" id="IPR036726">
    <property type="entry name" value="GTP1_OBG_dom_sf"/>
</dbReference>
<dbReference type="InterPro" id="IPR045086">
    <property type="entry name" value="OBG_GTPase"/>
</dbReference>
<dbReference type="InterPro" id="IPR027417">
    <property type="entry name" value="P-loop_NTPase"/>
</dbReference>
<dbReference type="NCBIfam" id="TIGR02729">
    <property type="entry name" value="Obg_CgtA"/>
    <property type="match status" value="1"/>
</dbReference>
<dbReference type="NCBIfam" id="NF008955">
    <property type="entry name" value="PRK12297.1"/>
    <property type="match status" value="1"/>
</dbReference>
<dbReference type="NCBIfam" id="NF008956">
    <property type="entry name" value="PRK12299.1"/>
    <property type="match status" value="1"/>
</dbReference>
<dbReference type="PANTHER" id="PTHR11702">
    <property type="entry name" value="DEVELOPMENTALLY REGULATED GTP-BINDING PROTEIN-RELATED"/>
    <property type="match status" value="1"/>
</dbReference>
<dbReference type="PANTHER" id="PTHR11702:SF31">
    <property type="entry name" value="MITOCHONDRIAL RIBOSOME-ASSOCIATED GTPASE 2"/>
    <property type="match status" value="1"/>
</dbReference>
<dbReference type="Pfam" id="PF01018">
    <property type="entry name" value="GTP1_OBG"/>
    <property type="match status" value="1"/>
</dbReference>
<dbReference type="Pfam" id="PF01926">
    <property type="entry name" value="MMR_HSR1"/>
    <property type="match status" value="1"/>
</dbReference>
<dbReference type="PIRSF" id="PIRSF002401">
    <property type="entry name" value="GTP_bd_Obg/CgtA"/>
    <property type="match status" value="1"/>
</dbReference>
<dbReference type="PRINTS" id="PR00326">
    <property type="entry name" value="GTP1OBG"/>
</dbReference>
<dbReference type="SUPFAM" id="SSF82051">
    <property type="entry name" value="Obg GTP-binding protein N-terminal domain"/>
    <property type="match status" value="1"/>
</dbReference>
<dbReference type="SUPFAM" id="SSF52540">
    <property type="entry name" value="P-loop containing nucleoside triphosphate hydrolases"/>
    <property type="match status" value="1"/>
</dbReference>
<dbReference type="PROSITE" id="PS51710">
    <property type="entry name" value="G_OBG"/>
    <property type="match status" value="1"/>
</dbReference>
<dbReference type="PROSITE" id="PS00905">
    <property type="entry name" value="GTP1_OBG"/>
    <property type="match status" value="1"/>
</dbReference>
<dbReference type="PROSITE" id="PS51883">
    <property type="entry name" value="OBG"/>
    <property type="match status" value="1"/>
</dbReference>
<keyword id="KW-0963">Cytoplasm</keyword>
<keyword id="KW-0342">GTP-binding</keyword>
<keyword id="KW-0378">Hydrolase</keyword>
<keyword id="KW-0460">Magnesium</keyword>
<keyword id="KW-0479">Metal-binding</keyword>
<keyword id="KW-0547">Nucleotide-binding</keyword>
<comment type="function">
    <text evidence="1">An essential GTPase which binds GTP, GDP and possibly (p)ppGpp with moderate affinity, with high nucleotide exchange rates and a fairly low GTP hydrolysis rate. Plays a role in control of the cell cycle, stress response, ribosome biogenesis and in those bacteria that undergo differentiation, in morphogenesis control.</text>
</comment>
<comment type="cofactor">
    <cofactor evidence="1">
        <name>Mg(2+)</name>
        <dbReference type="ChEBI" id="CHEBI:18420"/>
    </cofactor>
</comment>
<comment type="subunit">
    <text evidence="1">Monomer.</text>
</comment>
<comment type="subcellular location">
    <subcellularLocation>
        <location evidence="1">Cytoplasm</location>
    </subcellularLocation>
</comment>
<comment type="similarity">
    <text evidence="1">Belongs to the TRAFAC class OBG-HflX-like GTPase superfamily. OBG GTPase family.</text>
</comment>
<reference key="1">
    <citation type="submission" date="2007-09" db="EMBL/GenBank/DDBJ databases">
        <title>Complete genome sequence of Rickettsia akari.</title>
        <authorList>
            <person name="Madan A."/>
            <person name="Fahey J."/>
            <person name="Helton E."/>
            <person name="Ketteman M."/>
            <person name="Madan A."/>
            <person name="Rodrigues S."/>
            <person name="Sanchez A."/>
            <person name="Whiting M."/>
            <person name="Dasch G."/>
            <person name="Eremeeva M."/>
        </authorList>
    </citation>
    <scope>NUCLEOTIDE SEQUENCE [LARGE SCALE GENOMIC DNA]</scope>
    <source>
        <strain>Hartford</strain>
    </source>
</reference>
<accession>A8GQ55</accession>
<feature type="chain" id="PRO_0000386198" description="GTPase Obg">
    <location>
        <begin position="1"/>
        <end position="330"/>
    </location>
</feature>
<feature type="domain" description="Obg" evidence="2">
    <location>
        <begin position="1"/>
        <end position="159"/>
    </location>
</feature>
<feature type="domain" description="OBG-type G" evidence="1">
    <location>
        <begin position="160"/>
        <end position="327"/>
    </location>
</feature>
<feature type="binding site" evidence="1">
    <location>
        <begin position="166"/>
        <end position="173"/>
    </location>
    <ligand>
        <name>GTP</name>
        <dbReference type="ChEBI" id="CHEBI:37565"/>
    </ligand>
</feature>
<feature type="binding site" evidence="1">
    <location>
        <position position="173"/>
    </location>
    <ligand>
        <name>Mg(2+)</name>
        <dbReference type="ChEBI" id="CHEBI:18420"/>
    </ligand>
</feature>
<feature type="binding site" evidence="1">
    <location>
        <begin position="191"/>
        <end position="195"/>
    </location>
    <ligand>
        <name>GTP</name>
        <dbReference type="ChEBI" id="CHEBI:37565"/>
    </ligand>
</feature>
<feature type="binding site" evidence="1">
    <location>
        <position position="193"/>
    </location>
    <ligand>
        <name>Mg(2+)</name>
        <dbReference type="ChEBI" id="CHEBI:18420"/>
    </ligand>
</feature>
<feature type="binding site" evidence="1">
    <location>
        <begin position="212"/>
        <end position="215"/>
    </location>
    <ligand>
        <name>GTP</name>
        <dbReference type="ChEBI" id="CHEBI:37565"/>
    </ligand>
</feature>
<feature type="binding site" evidence="1">
    <location>
        <begin position="279"/>
        <end position="282"/>
    </location>
    <ligand>
        <name>GTP</name>
        <dbReference type="ChEBI" id="CHEBI:37565"/>
    </ligand>
</feature>
<feature type="binding site" evidence="1">
    <location>
        <begin position="308"/>
        <end position="310"/>
    </location>
    <ligand>
        <name>GTP</name>
        <dbReference type="ChEBI" id="CHEBI:37565"/>
    </ligand>
</feature>